<dbReference type="EC" id="3.5.1.18" evidence="1"/>
<dbReference type="EMBL" id="CP001048">
    <property type="protein sequence ID" value="ACC89836.1"/>
    <property type="molecule type" value="Genomic_DNA"/>
</dbReference>
<dbReference type="RefSeq" id="WP_002208549.1">
    <property type="nucleotide sequence ID" value="NZ_CP009780.1"/>
</dbReference>
<dbReference type="SMR" id="B2K985"/>
<dbReference type="MEROPS" id="M20.010"/>
<dbReference type="GeneID" id="57975649"/>
<dbReference type="KEGG" id="ypb:YPTS_2879"/>
<dbReference type="PATRIC" id="fig|502801.10.peg.2309"/>
<dbReference type="UniPathway" id="UPA00034">
    <property type="reaction ID" value="UER00021"/>
</dbReference>
<dbReference type="GO" id="GO:0008777">
    <property type="term" value="F:acetylornithine deacetylase activity"/>
    <property type="evidence" value="ECO:0007669"/>
    <property type="project" value="TreeGrafter"/>
</dbReference>
<dbReference type="GO" id="GO:0050897">
    <property type="term" value="F:cobalt ion binding"/>
    <property type="evidence" value="ECO:0007669"/>
    <property type="project" value="UniProtKB-UniRule"/>
</dbReference>
<dbReference type="GO" id="GO:0009014">
    <property type="term" value="F:succinyl-diaminopimelate desuccinylase activity"/>
    <property type="evidence" value="ECO:0007669"/>
    <property type="project" value="UniProtKB-UniRule"/>
</dbReference>
<dbReference type="GO" id="GO:0008270">
    <property type="term" value="F:zinc ion binding"/>
    <property type="evidence" value="ECO:0007669"/>
    <property type="project" value="UniProtKB-UniRule"/>
</dbReference>
<dbReference type="GO" id="GO:0019877">
    <property type="term" value="P:diaminopimelate biosynthetic process"/>
    <property type="evidence" value="ECO:0007669"/>
    <property type="project" value="UniProtKB-UniRule"/>
</dbReference>
<dbReference type="GO" id="GO:0006526">
    <property type="term" value="P:L-arginine biosynthetic process"/>
    <property type="evidence" value="ECO:0007669"/>
    <property type="project" value="TreeGrafter"/>
</dbReference>
<dbReference type="GO" id="GO:0009089">
    <property type="term" value="P:lysine biosynthetic process via diaminopimelate"/>
    <property type="evidence" value="ECO:0007669"/>
    <property type="project" value="UniProtKB-UniRule"/>
</dbReference>
<dbReference type="CDD" id="cd03891">
    <property type="entry name" value="M20_DapE_proteobac"/>
    <property type="match status" value="1"/>
</dbReference>
<dbReference type="FunFam" id="3.30.70.360:FF:000011">
    <property type="entry name" value="Succinyl-diaminopimelate desuccinylase"/>
    <property type="match status" value="1"/>
</dbReference>
<dbReference type="FunFam" id="3.40.630.10:FF:000005">
    <property type="entry name" value="Succinyl-diaminopimelate desuccinylase"/>
    <property type="match status" value="1"/>
</dbReference>
<dbReference type="FunFam" id="3.40.630.10:FF:000010">
    <property type="entry name" value="Succinyl-diaminopimelate desuccinylase"/>
    <property type="match status" value="1"/>
</dbReference>
<dbReference type="Gene3D" id="3.40.630.10">
    <property type="entry name" value="Zn peptidases"/>
    <property type="match status" value="2"/>
</dbReference>
<dbReference type="HAMAP" id="MF_01690">
    <property type="entry name" value="DapE"/>
    <property type="match status" value="1"/>
</dbReference>
<dbReference type="InterPro" id="IPR001261">
    <property type="entry name" value="ArgE/DapE_CS"/>
</dbReference>
<dbReference type="InterPro" id="IPR036264">
    <property type="entry name" value="Bact_exopeptidase_dim_dom"/>
</dbReference>
<dbReference type="InterPro" id="IPR005941">
    <property type="entry name" value="DapE_proteobac"/>
</dbReference>
<dbReference type="InterPro" id="IPR002933">
    <property type="entry name" value="Peptidase_M20"/>
</dbReference>
<dbReference type="InterPro" id="IPR011650">
    <property type="entry name" value="Peptidase_M20_dimer"/>
</dbReference>
<dbReference type="InterPro" id="IPR050072">
    <property type="entry name" value="Peptidase_M20A"/>
</dbReference>
<dbReference type="NCBIfam" id="TIGR01246">
    <property type="entry name" value="dapE_proteo"/>
    <property type="match status" value="1"/>
</dbReference>
<dbReference type="NCBIfam" id="NF009557">
    <property type="entry name" value="PRK13009.1"/>
    <property type="match status" value="1"/>
</dbReference>
<dbReference type="PANTHER" id="PTHR43808">
    <property type="entry name" value="ACETYLORNITHINE DEACETYLASE"/>
    <property type="match status" value="1"/>
</dbReference>
<dbReference type="PANTHER" id="PTHR43808:SF31">
    <property type="entry name" value="N-ACETYL-L-CITRULLINE DEACETYLASE"/>
    <property type="match status" value="1"/>
</dbReference>
<dbReference type="Pfam" id="PF07687">
    <property type="entry name" value="M20_dimer"/>
    <property type="match status" value="1"/>
</dbReference>
<dbReference type="Pfam" id="PF01546">
    <property type="entry name" value="Peptidase_M20"/>
    <property type="match status" value="1"/>
</dbReference>
<dbReference type="SUPFAM" id="SSF55031">
    <property type="entry name" value="Bacterial exopeptidase dimerisation domain"/>
    <property type="match status" value="1"/>
</dbReference>
<dbReference type="SUPFAM" id="SSF53187">
    <property type="entry name" value="Zn-dependent exopeptidases"/>
    <property type="match status" value="1"/>
</dbReference>
<dbReference type="PROSITE" id="PS00758">
    <property type="entry name" value="ARGE_DAPE_CPG2_1"/>
    <property type="match status" value="1"/>
</dbReference>
<accession>B2K985</accession>
<feature type="chain" id="PRO_0000375800" description="Succinyl-diaminopimelate desuccinylase">
    <location>
        <begin position="1"/>
        <end position="375"/>
    </location>
</feature>
<feature type="active site" evidence="1">
    <location>
        <position position="68"/>
    </location>
</feature>
<feature type="active site" description="Proton acceptor" evidence="1">
    <location>
        <position position="133"/>
    </location>
</feature>
<feature type="binding site" evidence="1">
    <location>
        <position position="66"/>
    </location>
    <ligand>
        <name>Zn(2+)</name>
        <dbReference type="ChEBI" id="CHEBI:29105"/>
        <label>1</label>
    </ligand>
</feature>
<feature type="binding site" evidence="1">
    <location>
        <position position="99"/>
    </location>
    <ligand>
        <name>Zn(2+)</name>
        <dbReference type="ChEBI" id="CHEBI:29105"/>
        <label>1</label>
    </ligand>
</feature>
<feature type="binding site" evidence="1">
    <location>
        <position position="99"/>
    </location>
    <ligand>
        <name>Zn(2+)</name>
        <dbReference type="ChEBI" id="CHEBI:29105"/>
        <label>2</label>
    </ligand>
</feature>
<feature type="binding site" evidence="1">
    <location>
        <position position="134"/>
    </location>
    <ligand>
        <name>Zn(2+)</name>
        <dbReference type="ChEBI" id="CHEBI:29105"/>
        <label>2</label>
    </ligand>
</feature>
<feature type="binding site" evidence="1">
    <location>
        <position position="162"/>
    </location>
    <ligand>
        <name>Zn(2+)</name>
        <dbReference type="ChEBI" id="CHEBI:29105"/>
        <label>1</label>
    </ligand>
</feature>
<feature type="binding site" evidence="1">
    <location>
        <position position="348"/>
    </location>
    <ligand>
        <name>Zn(2+)</name>
        <dbReference type="ChEBI" id="CHEBI:29105"/>
        <label>2</label>
    </ligand>
</feature>
<evidence type="ECO:0000255" key="1">
    <source>
        <dbReference type="HAMAP-Rule" id="MF_01690"/>
    </source>
</evidence>
<reference key="1">
    <citation type="submission" date="2008-04" db="EMBL/GenBank/DDBJ databases">
        <title>Complete sequence of Yersinia pseudotuberculosis PB1/+.</title>
        <authorList>
            <person name="Copeland A."/>
            <person name="Lucas S."/>
            <person name="Lapidus A."/>
            <person name="Glavina del Rio T."/>
            <person name="Dalin E."/>
            <person name="Tice H."/>
            <person name="Bruce D."/>
            <person name="Goodwin L."/>
            <person name="Pitluck S."/>
            <person name="Munk A.C."/>
            <person name="Brettin T."/>
            <person name="Detter J.C."/>
            <person name="Han C."/>
            <person name="Tapia R."/>
            <person name="Schmutz J."/>
            <person name="Larimer F."/>
            <person name="Land M."/>
            <person name="Hauser L."/>
            <person name="Challacombe J.F."/>
            <person name="Green L."/>
            <person name="Lindler L.E."/>
            <person name="Nikolich M.P."/>
            <person name="Richardson P."/>
        </authorList>
    </citation>
    <scope>NUCLEOTIDE SEQUENCE [LARGE SCALE GENOMIC DNA]</scope>
    <source>
        <strain>PB1/+</strain>
    </source>
</reference>
<gene>
    <name evidence="1" type="primary">dapE</name>
    <name type="ordered locus">YPTS_2879</name>
</gene>
<name>DAPE_YERPB</name>
<keyword id="KW-0028">Amino-acid biosynthesis</keyword>
<keyword id="KW-0170">Cobalt</keyword>
<keyword id="KW-0220">Diaminopimelate biosynthesis</keyword>
<keyword id="KW-0378">Hydrolase</keyword>
<keyword id="KW-0457">Lysine biosynthesis</keyword>
<keyword id="KW-0479">Metal-binding</keyword>
<keyword id="KW-0862">Zinc</keyword>
<comment type="function">
    <text evidence="1">Catalyzes the hydrolysis of N-succinyl-L,L-diaminopimelic acid (SDAP), forming succinate and LL-2,6-diaminopimelate (DAP), an intermediate involved in the bacterial biosynthesis of lysine and meso-diaminopimelic acid, an essential component of bacterial cell walls.</text>
</comment>
<comment type="catalytic activity">
    <reaction evidence="1">
        <text>N-succinyl-(2S,6S)-2,6-diaminopimelate + H2O = (2S,6S)-2,6-diaminopimelate + succinate</text>
        <dbReference type="Rhea" id="RHEA:22608"/>
        <dbReference type="ChEBI" id="CHEBI:15377"/>
        <dbReference type="ChEBI" id="CHEBI:30031"/>
        <dbReference type="ChEBI" id="CHEBI:57609"/>
        <dbReference type="ChEBI" id="CHEBI:58087"/>
        <dbReference type="EC" id="3.5.1.18"/>
    </reaction>
</comment>
<comment type="cofactor">
    <cofactor evidence="1">
        <name>Zn(2+)</name>
        <dbReference type="ChEBI" id="CHEBI:29105"/>
    </cofactor>
    <cofactor evidence="1">
        <name>Co(2+)</name>
        <dbReference type="ChEBI" id="CHEBI:48828"/>
    </cofactor>
    <text evidence="1">Binds 2 Zn(2+) or Co(2+) ions per subunit.</text>
</comment>
<comment type="pathway">
    <text evidence="1">Amino-acid biosynthesis; L-lysine biosynthesis via DAP pathway; LL-2,6-diaminopimelate from (S)-tetrahydrodipicolinate (succinylase route): step 3/3.</text>
</comment>
<comment type="subunit">
    <text evidence="1">Homodimer.</text>
</comment>
<comment type="similarity">
    <text evidence="1">Belongs to the peptidase M20A family. DapE subfamily.</text>
</comment>
<protein>
    <recommendedName>
        <fullName evidence="1">Succinyl-diaminopimelate desuccinylase</fullName>
        <shortName evidence="1">SDAP desuccinylase</shortName>
        <ecNumber evidence="1">3.5.1.18</ecNumber>
    </recommendedName>
    <alternativeName>
        <fullName evidence="1">N-succinyl-LL-2,6-diaminoheptanedioate amidohydrolase</fullName>
    </alternativeName>
</protein>
<organism>
    <name type="scientific">Yersinia pseudotuberculosis serotype IB (strain PB1/+)</name>
    <dbReference type="NCBI Taxonomy" id="502801"/>
    <lineage>
        <taxon>Bacteria</taxon>
        <taxon>Pseudomonadati</taxon>
        <taxon>Pseudomonadota</taxon>
        <taxon>Gammaproteobacteria</taxon>
        <taxon>Enterobacterales</taxon>
        <taxon>Yersiniaceae</taxon>
        <taxon>Yersinia</taxon>
    </lineage>
</organism>
<sequence length="375" mass="40933">MICPVIELAQQLIKRPSLSPSDAGCQEIMIQRLAAIGFTIEPMNFGDTLNFWAWRGEGETLAFAGHTDVVPTGDESHWHSPPFEPTIRDGMLYGRGAADMKGSLAAMIVAAERFVAAHPDHKGRLAFMITSDEEAKATNGTVKVVEALMARHERLDYCLVGEPSSTDRVGDIVKNGRRGSITANLRIHGVQGHVAYPHLADNPVHRAMPALNELVATQWDEGNAFFPATSMQIANLQAGTGSNNVIPGEFYVQFNFRFSTELTDSLIKQRVAALLDRHQLDYTLEWVLSGQPFLTAKGALVDAVVNAVKHYTEITPQLLTTGGTSDGRFIALMGAQVVELGPVNATIHKVNECVSAADLQLLSRMYQKIMEQLIA</sequence>
<proteinExistence type="inferred from homology"/>